<gene>
    <name evidence="1" type="primary">rpl40e</name>
    <name type="ordered locus">MmarC5_1524</name>
</gene>
<dbReference type="EMBL" id="CP000609">
    <property type="protein sequence ID" value="ABO35821.1"/>
    <property type="molecule type" value="Genomic_DNA"/>
</dbReference>
<dbReference type="RefSeq" id="WP_011170095.1">
    <property type="nucleotide sequence ID" value="NC_009135.1"/>
</dbReference>
<dbReference type="SMR" id="A4G037"/>
<dbReference type="STRING" id="402880.MmarC5_1524"/>
<dbReference type="GeneID" id="4928811"/>
<dbReference type="KEGG" id="mmq:MmarC5_1524"/>
<dbReference type="eggNOG" id="arCOG04049">
    <property type="taxonomic scope" value="Archaea"/>
</dbReference>
<dbReference type="HOGENOM" id="CLU_205640_0_0_2"/>
<dbReference type="OrthoDB" id="45138at2157"/>
<dbReference type="Proteomes" id="UP000000253">
    <property type="component" value="Chromosome"/>
</dbReference>
<dbReference type="GO" id="GO:1990904">
    <property type="term" value="C:ribonucleoprotein complex"/>
    <property type="evidence" value="ECO:0007669"/>
    <property type="project" value="UniProtKB-KW"/>
</dbReference>
<dbReference type="GO" id="GO:0005840">
    <property type="term" value="C:ribosome"/>
    <property type="evidence" value="ECO:0007669"/>
    <property type="project" value="UniProtKB-KW"/>
</dbReference>
<dbReference type="GO" id="GO:0003735">
    <property type="term" value="F:structural constituent of ribosome"/>
    <property type="evidence" value="ECO:0007669"/>
    <property type="project" value="InterPro"/>
</dbReference>
<dbReference type="GO" id="GO:0006412">
    <property type="term" value="P:translation"/>
    <property type="evidence" value="ECO:0007669"/>
    <property type="project" value="UniProtKB-UniRule"/>
</dbReference>
<dbReference type="Gene3D" id="4.10.1060.50">
    <property type="match status" value="1"/>
</dbReference>
<dbReference type="HAMAP" id="MF_00788">
    <property type="entry name" value="Ribosomal_eL40"/>
    <property type="match status" value="1"/>
</dbReference>
<dbReference type="InterPro" id="IPR023657">
    <property type="entry name" value="Ribosomal_eL40_arc"/>
</dbReference>
<dbReference type="InterPro" id="IPR001975">
    <property type="entry name" value="Ribosomal_eL40_dom"/>
</dbReference>
<dbReference type="InterPro" id="IPR038587">
    <property type="entry name" value="Ribosomal_eL40_sf"/>
</dbReference>
<dbReference type="InterPro" id="IPR011332">
    <property type="entry name" value="Ribosomal_zn-bd"/>
</dbReference>
<dbReference type="NCBIfam" id="NF003161">
    <property type="entry name" value="PRK04136.1"/>
    <property type="match status" value="1"/>
</dbReference>
<dbReference type="PANTHER" id="PTHR39649">
    <property type="entry name" value="50S RIBOSOMAL PROTEIN L40E"/>
    <property type="match status" value="1"/>
</dbReference>
<dbReference type="PANTHER" id="PTHR39649:SF1">
    <property type="entry name" value="LARGE RIBOSOMAL SUBUNIT PROTEIN EL40"/>
    <property type="match status" value="1"/>
</dbReference>
<dbReference type="Pfam" id="PF01020">
    <property type="entry name" value="Ribosomal_L40e"/>
    <property type="match status" value="1"/>
</dbReference>
<dbReference type="SMART" id="SM01377">
    <property type="entry name" value="Ribosomal_L40e"/>
    <property type="match status" value="1"/>
</dbReference>
<dbReference type="SUPFAM" id="SSF57829">
    <property type="entry name" value="Zn-binding ribosomal proteins"/>
    <property type="match status" value="1"/>
</dbReference>
<accession>A4G037</accession>
<evidence type="ECO:0000255" key="1">
    <source>
        <dbReference type="HAMAP-Rule" id="MF_00788"/>
    </source>
</evidence>
<evidence type="ECO:0000305" key="2"/>
<protein>
    <recommendedName>
        <fullName evidence="1">Large ribosomal subunit protein eL40</fullName>
    </recommendedName>
    <alternativeName>
        <fullName evidence="2">50S ribosomal protein L40e</fullName>
    </alternativeName>
</protein>
<name>RL40_METM5</name>
<reference key="1">
    <citation type="submission" date="2007-03" db="EMBL/GenBank/DDBJ databases">
        <title>Complete sequence of chromosome of Methanococcus maripaludis C5.</title>
        <authorList>
            <consortium name="US DOE Joint Genome Institute"/>
            <person name="Copeland A."/>
            <person name="Lucas S."/>
            <person name="Lapidus A."/>
            <person name="Barry K."/>
            <person name="Glavina del Rio T."/>
            <person name="Dalin E."/>
            <person name="Tice H."/>
            <person name="Pitluck S."/>
            <person name="Chertkov O."/>
            <person name="Brettin T."/>
            <person name="Bruce D."/>
            <person name="Han C."/>
            <person name="Detter J.C."/>
            <person name="Schmutz J."/>
            <person name="Larimer F."/>
            <person name="Land M."/>
            <person name="Hauser L."/>
            <person name="Kyrpides N."/>
            <person name="Mikhailova N."/>
            <person name="Sieprawska-Lupa M."/>
            <person name="Whitman W.B."/>
            <person name="Richardson P."/>
        </authorList>
    </citation>
    <scope>NUCLEOTIDE SEQUENCE [LARGE SCALE GENOMIC DNA]</scope>
    <source>
        <strain>C5 / ATCC BAA-1333</strain>
    </source>
</reference>
<keyword id="KW-0687">Ribonucleoprotein</keyword>
<keyword id="KW-0689">Ribosomal protein</keyword>
<sequence>MAFEEAIKRVFMKKICMKCNSRNSWKATKCRKCGYTNLRPKAKEARA</sequence>
<proteinExistence type="inferred from homology"/>
<comment type="similarity">
    <text evidence="1">Belongs to the eukaryotic ribosomal protein eL40 family.</text>
</comment>
<organism>
    <name type="scientific">Methanococcus maripaludis (strain C5 / ATCC BAA-1333)</name>
    <dbReference type="NCBI Taxonomy" id="402880"/>
    <lineage>
        <taxon>Archaea</taxon>
        <taxon>Methanobacteriati</taxon>
        <taxon>Methanobacteriota</taxon>
        <taxon>Methanomada group</taxon>
        <taxon>Methanococci</taxon>
        <taxon>Methanococcales</taxon>
        <taxon>Methanococcaceae</taxon>
        <taxon>Methanococcus</taxon>
    </lineage>
</organism>
<feature type="chain" id="PRO_1000046884" description="Large ribosomal subunit protein eL40">
    <location>
        <begin position="1"/>
        <end position="47"/>
    </location>
</feature>